<feature type="chain" id="PRO_0000317572" description="tRNA (guanine(27)-N(2))-dimethyltransferase">
    <location>
        <begin position="1"/>
        <end position="723"/>
    </location>
</feature>
<feature type="domain" description="Trm1 methyltransferase" evidence="4">
    <location>
        <begin position="220"/>
        <end position="679"/>
    </location>
</feature>
<feature type="zinc finger region" description="C2H2-type">
    <location>
        <begin position="177"/>
        <end position="199"/>
    </location>
</feature>
<feature type="region of interest" description="Disordered" evidence="5">
    <location>
        <begin position="1"/>
        <end position="72"/>
    </location>
</feature>
<feature type="short sequence motif" description="Nucleolar localization signal" evidence="3">
    <location>
        <begin position="128"/>
        <end position="132"/>
    </location>
</feature>
<feature type="compositionally biased region" description="Acidic residues" evidence="5">
    <location>
        <begin position="1"/>
        <end position="10"/>
    </location>
</feature>
<feature type="compositionally biased region" description="Low complexity" evidence="5">
    <location>
        <begin position="32"/>
        <end position="44"/>
    </location>
</feature>
<feature type="compositionally biased region" description="Pro residues" evidence="5">
    <location>
        <begin position="45"/>
        <end position="59"/>
    </location>
</feature>
<feature type="binding site" evidence="2">
    <location>
        <position position="253"/>
    </location>
    <ligand>
        <name>S-adenosyl-L-methionine</name>
        <dbReference type="ChEBI" id="CHEBI:59789"/>
    </ligand>
</feature>
<feature type="binding site" evidence="2">
    <location>
        <position position="300"/>
    </location>
    <ligand>
        <name>S-adenosyl-L-methionine</name>
        <dbReference type="ChEBI" id="CHEBI:59789"/>
    </ligand>
</feature>
<feature type="binding site" evidence="2">
    <location>
        <position position="348"/>
    </location>
    <ligand>
        <name>S-adenosyl-L-methionine</name>
        <dbReference type="ChEBI" id="CHEBI:59789"/>
    </ligand>
</feature>
<feature type="binding site" evidence="2">
    <location>
        <position position="349"/>
    </location>
    <ligand>
        <name>S-adenosyl-L-methionine</name>
        <dbReference type="ChEBI" id="CHEBI:59789"/>
    </ligand>
</feature>
<feature type="binding site" evidence="2">
    <location>
        <position position="479"/>
    </location>
    <ligand>
        <name>Zn(2+)</name>
        <dbReference type="ChEBI" id="CHEBI:29105"/>
    </ligand>
</feature>
<feature type="binding site" evidence="2">
    <location>
        <position position="482"/>
    </location>
    <ligand>
        <name>Zn(2+)</name>
        <dbReference type="ChEBI" id="CHEBI:29105"/>
    </ligand>
</feature>
<feature type="binding site" evidence="2">
    <location>
        <position position="504"/>
    </location>
    <ligand>
        <name>Zn(2+)</name>
        <dbReference type="ChEBI" id="CHEBI:29105"/>
    </ligand>
</feature>
<feature type="binding site" evidence="2">
    <location>
        <position position="506"/>
    </location>
    <ligand>
        <name>Zn(2+)</name>
        <dbReference type="ChEBI" id="CHEBI:29105"/>
    </ligand>
</feature>
<feature type="modified residue" description="Phosphothreonine" evidence="3">
    <location>
        <position position="23"/>
    </location>
</feature>
<feature type="modified residue" description="Phosphoserine" evidence="3">
    <location>
        <position position="61"/>
    </location>
</feature>
<feature type="modified residue" description="Phosphoserine" evidence="3">
    <location>
        <position position="603"/>
    </location>
</feature>
<feature type="cross-link" description="Glycyl lysine isopeptide (Lys-Gly) (interchain with G-Cter in SUMO2)" evidence="3">
    <location>
        <position position="576"/>
    </location>
</feature>
<protein>
    <recommendedName>
        <fullName evidence="6">tRNA (guanine(27)-N(2))-dimethyltransferase</fullName>
        <ecNumber evidence="3">2.1.1.-</ecNumber>
    </recommendedName>
    <alternativeName>
        <fullName evidence="1">tRNA methyltransferase 1-like protein</fullName>
        <shortName evidence="1">TRMT1-like protein</shortName>
    </alternativeName>
</protein>
<comment type="function">
    <text evidence="3">Specifically dimethylates a single guanine residue at position 27 of tRNA(Tyr) using S-adenosyl-L-methionine as donor of the methyl groups. Dimethylation at position 27 of tRNA(Tyr) is required for efficient translation of tyrosine codons. Also required to maintain 3-(3-amino-3-carboxypropyl)uridine (acp3U) in the D-loop of several cytoplasmic tRNAs.</text>
</comment>
<comment type="catalytic activity">
    <reaction evidence="3">
        <text>guanosine(27) in tRNA(Tyr) + 2 S-adenosyl-L-methionine = N(2)-dimethylguanosine(27) in tRNA(Tyr) + 2 S-adenosyl-L-homocysteine + 2 H(+)</text>
        <dbReference type="Rhea" id="RHEA:83895"/>
        <dbReference type="Rhea" id="RHEA-COMP:20240"/>
        <dbReference type="Rhea" id="RHEA-COMP:20241"/>
        <dbReference type="ChEBI" id="CHEBI:15378"/>
        <dbReference type="ChEBI" id="CHEBI:57856"/>
        <dbReference type="ChEBI" id="CHEBI:59789"/>
        <dbReference type="ChEBI" id="CHEBI:74269"/>
        <dbReference type="ChEBI" id="CHEBI:74513"/>
    </reaction>
    <physiologicalReaction direction="left-to-right" evidence="3">
        <dbReference type="Rhea" id="RHEA:83896"/>
    </physiologicalReaction>
</comment>
<comment type="subcellular location">
    <subcellularLocation>
        <location evidence="3">Nucleus</location>
        <location evidence="3">Nucleolus</location>
    </subcellularLocation>
</comment>
<comment type="similarity">
    <text evidence="4">Belongs to the class I-like SAM-binding methyltransferase superfamily. Trm1 family.</text>
</comment>
<gene>
    <name evidence="7" type="primary">Trmt1l</name>
</gene>
<organism>
    <name type="scientific">Rattus norvegicus</name>
    <name type="common">Rat</name>
    <dbReference type="NCBI Taxonomy" id="10116"/>
    <lineage>
        <taxon>Eukaryota</taxon>
        <taxon>Metazoa</taxon>
        <taxon>Chordata</taxon>
        <taxon>Craniata</taxon>
        <taxon>Vertebrata</taxon>
        <taxon>Euteleostomi</taxon>
        <taxon>Mammalia</taxon>
        <taxon>Eutheria</taxon>
        <taxon>Euarchontoglires</taxon>
        <taxon>Glires</taxon>
        <taxon>Rodentia</taxon>
        <taxon>Myomorpha</taxon>
        <taxon>Muroidea</taxon>
        <taxon>Muridae</taxon>
        <taxon>Murinae</taxon>
        <taxon>Rattus</taxon>
    </lineage>
</organism>
<accession>Q496Z9</accession>
<proteinExistence type="evidence at transcript level"/>
<sequence>MENMAEEELLPQEKEEAQVRVPTPDSAPVPAPAADTALDSAPTPDSAPAPALAPAPAPALSPSLASVPEEAESKRHISIQRRLADLEKLAFGTEGDVDSASSLNSDNLENIQTCPLCPKEKFRAYSSHKLRRHLQNLHWKISVEFEGSRMCICHLACRPVKPTIVGEQISSKLGAHYHCIICSATITRRTDMLGHVKRHVNKGETKSRYISASTAKSSNEVLKETDTDIQVFPNYSIPQKTDSYFNPKMKLNRQIIFCTLAALAEERKPLECLDAFGATGIMGLQWAKHLGNAVKVTINDLNENSVTLIQKNCHLNKLKVVVDSEEKEEGDGLEDCSTAGDIQVTRMDANVLMHLRSFDFIHLDPFGTSVNYLDSAFRNVRNLGIVSVTSTDISSLYAKAQHVARRHYGCNIVRTEYYKELAARIVVAAVARAAARCNKGVEVLFAVALEHFVLVVVRVLRGPTSADETAKKIQYLIHCQWCEERIFQKDGNMVEENPYKQLPCNCHGSMPGKTAIELGPLWSSSLFNTGFLKRMLFESIHHGLDDIQPLIKTLIFESECTPQSQCSVHAPSNTNKQEENGVFVKTTDDTTIDIYSAQGKRKSNEMAINVAKKQKTDASTAHPPFYYNIHRHSIKGMNMPKLKKFLCCLSQAGFRVSRTHFDPMGIRTDASLTQFKSILLKYSTPTYTGGQSEGQVPAPEDTVTDPVELSVNDKAEVSGCRRW</sequence>
<name>TRM1L_RAT</name>
<dbReference type="EC" id="2.1.1.-" evidence="3"/>
<dbReference type="EMBL" id="BC100650">
    <property type="protein sequence ID" value="AAI00651.1"/>
    <property type="molecule type" value="mRNA"/>
</dbReference>
<dbReference type="RefSeq" id="NP_001032269.1">
    <property type="nucleotide sequence ID" value="NM_001037192.1"/>
</dbReference>
<dbReference type="SMR" id="Q496Z9"/>
<dbReference type="FunCoup" id="Q496Z9">
    <property type="interactions" value="1835"/>
</dbReference>
<dbReference type="STRING" id="10116.ENSRNOP00000003517"/>
<dbReference type="GlyGen" id="Q496Z9">
    <property type="glycosylation" value="2 sites"/>
</dbReference>
<dbReference type="iPTMnet" id="Q496Z9"/>
<dbReference type="PhosphoSitePlus" id="Q496Z9"/>
<dbReference type="PaxDb" id="10116-ENSRNOP00000003517"/>
<dbReference type="GeneID" id="304851"/>
<dbReference type="KEGG" id="rno:304851"/>
<dbReference type="UCSC" id="RGD:1307890">
    <property type="organism name" value="rat"/>
</dbReference>
<dbReference type="AGR" id="RGD:1307890"/>
<dbReference type="CTD" id="81627"/>
<dbReference type="RGD" id="1307890">
    <property type="gene designation" value="Trmt1l"/>
</dbReference>
<dbReference type="VEuPathDB" id="HostDB:ENSRNOG00000002580"/>
<dbReference type="eggNOG" id="KOG1253">
    <property type="taxonomic scope" value="Eukaryota"/>
</dbReference>
<dbReference type="HOGENOM" id="CLU_010862_3_0_1"/>
<dbReference type="InParanoid" id="Q496Z9"/>
<dbReference type="OrthoDB" id="6349953at2759"/>
<dbReference type="PhylomeDB" id="Q496Z9"/>
<dbReference type="PRO" id="PR:Q496Z9"/>
<dbReference type="Proteomes" id="UP000002494">
    <property type="component" value="Chromosome 13"/>
</dbReference>
<dbReference type="Bgee" id="ENSRNOG00000002580">
    <property type="expression patterns" value="Expressed in quadriceps femoris and 19 other cell types or tissues"/>
</dbReference>
<dbReference type="GO" id="GO:0005730">
    <property type="term" value="C:nucleolus"/>
    <property type="evidence" value="ECO:0000250"/>
    <property type="project" value="UniProtKB"/>
</dbReference>
<dbReference type="GO" id="GO:0005634">
    <property type="term" value="C:nucleus"/>
    <property type="evidence" value="ECO:0000250"/>
    <property type="project" value="UniProtKB"/>
</dbReference>
<dbReference type="GO" id="GO:0016423">
    <property type="term" value="F:tRNA (guanine) methyltransferase activity"/>
    <property type="evidence" value="ECO:0007669"/>
    <property type="project" value="InterPro"/>
</dbReference>
<dbReference type="GO" id="GO:0000049">
    <property type="term" value="F:tRNA binding"/>
    <property type="evidence" value="ECO:0007669"/>
    <property type="project" value="UniProtKB-KW"/>
</dbReference>
<dbReference type="GO" id="GO:0008270">
    <property type="term" value="F:zinc ion binding"/>
    <property type="evidence" value="ECO:0007669"/>
    <property type="project" value="UniProtKB-KW"/>
</dbReference>
<dbReference type="GO" id="GO:0030534">
    <property type="term" value="P:adult behavior"/>
    <property type="evidence" value="ECO:0000266"/>
    <property type="project" value="RGD"/>
</dbReference>
<dbReference type="GO" id="GO:0008344">
    <property type="term" value="P:adult locomotory behavior"/>
    <property type="evidence" value="ECO:0000266"/>
    <property type="project" value="RGD"/>
</dbReference>
<dbReference type="GO" id="GO:0002940">
    <property type="term" value="P:tRNA N2-guanine methylation"/>
    <property type="evidence" value="ECO:0000318"/>
    <property type="project" value="GO_Central"/>
</dbReference>
<dbReference type="CDD" id="cd02440">
    <property type="entry name" value="AdoMet_MTases"/>
    <property type="match status" value="1"/>
</dbReference>
<dbReference type="FunFam" id="3.40.50.150:FF:000098">
    <property type="entry name" value="Trmt1-like isoform 1"/>
    <property type="match status" value="1"/>
</dbReference>
<dbReference type="FunFam" id="3.30.56.70:FF:000001">
    <property type="entry name" value="tRNA (guanine(26)-N(2))-dimethyltransferase"/>
    <property type="match status" value="1"/>
</dbReference>
<dbReference type="Gene3D" id="3.30.56.70">
    <property type="entry name" value="N2,N2-dimethylguanosine tRNA methyltransferase, C-terminal domain"/>
    <property type="match status" value="1"/>
</dbReference>
<dbReference type="Gene3D" id="3.40.50.150">
    <property type="entry name" value="Vaccinia Virus protein VP39"/>
    <property type="match status" value="1"/>
</dbReference>
<dbReference type="InterPro" id="IPR029063">
    <property type="entry name" value="SAM-dependent_MTases_sf"/>
</dbReference>
<dbReference type="InterPro" id="IPR002905">
    <property type="entry name" value="Trm1"/>
</dbReference>
<dbReference type="InterPro" id="IPR042296">
    <property type="entry name" value="tRNA_met_Trm1_C"/>
</dbReference>
<dbReference type="InterPro" id="IPR013087">
    <property type="entry name" value="Znf_C2H2_type"/>
</dbReference>
<dbReference type="PANTHER" id="PTHR10631">
    <property type="entry name" value="N 2 ,N 2 -DIMETHYLGUANOSINE TRNA METHYLTRANSFERASE"/>
    <property type="match status" value="1"/>
</dbReference>
<dbReference type="PANTHER" id="PTHR10631:SF1">
    <property type="entry name" value="TRMT1-LIKE PROTEIN"/>
    <property type="match status" value="1"/>
</dbReference>
<dbReference type="Pfam" id="PF02005">
    <property type="entry name" value="TRM"/>
    <property type="match status" value="2"/>
</dbReference>
<dbReference type="SMART" id="SM00355">
    <property type="entry name" value="ZnF_C2H2"/>
    <property type="match status" value="2"/>
</dbReference>
<dbReference type="SUPFAM" id="SSF53335">
    <property type="entry name" value="S-adenosyl-L-methionine-dependent methyltransferases"/>
    <property type="match status" value="1"/>
</dbReference>
<dbReference type="PROSITE" id="PS51626">
    <property type="entry name" value="SAM_MT_TRM1"/>
    <property type="match status" value="1"/>
</dbReference>
<dbReference type="PROSITE" id="PS00028">
    <property type="entry name" value="ZINC_FINGER_C2H2_1"/>
    <property type="match status" value="1"/>
</dbReference>
<evidence type="ECO:0000250" key="1">
    <source>
        <dbReference type="UniProtKB" id="A2RSY6"/>
    </source>
</evidence>
<evidence type="ECO:0000250" key="2">
    <source>
        <dbReference type="UniProtKB" id="O67010"/>
    </source>
</evidence>
<evidence type="ECO:0000250" key="3">
    <source>
        <dbReference type="UniProtKB" id="Q7Z2T5"/>
    </source>
</evidence>
<evidence type="ECO:0000255" key="4">
    <source>
        <dbReference type="PROSITE-ProRule" id="PRU00958"/>
    </source>
</evidence>
<evidence type="ECO:0000256" key="5">
    <source>
        <dbReference type="SAM" id="MobiDB-lite"/>
    </source>
</evidence>
<evidence type="ECO:0000305" key="6"/>
<evidence type="ECO:0000312" key="7">
    <source>
        <dbReference type="RGD" id="1307890"/>
    </source>
</evidence>
<reference key="1">
    <citation type="journal article" date="2004" name="Genome Res.">
        <title>The status, quality, and expansion of the NIH full-length cDNA project: the Mammalian Gene Collection (MGC).</title>
        <authorList>
            <consortium name="The MGC Project Team"/>
        </authorList>
    </citation>
    <scope>NUCLEOTIDE SEQUENCE [LARGE SCALE MRNA]</scope>
    <source>
        <tissue>Prostate</tissue>
    </source>
</reference>
<keyword id="KW-1017">Isopeptide bond</keyword>
<keyword id="KW-0479">Metal-binding</keyword>
<keyword id="KW-0489">Methyltransferase</keyword>
<keyword id="KW-0539">Nucleus</keyword>
<keyword id="KW-0597">Phosphoprotein</keyword>
<keyword id="KW-1185">Reference proteome</keyword>
<keyword id="KW-0694">RNA-binding</keyword>
<keyword id="KW-0949">S-adenosyl-L-methionine</keyword>
<keyword id="KW-0808">Transferase</keyword>
<keyword id="KW-0819">tRNA processing</keyword>
<keyword id="KW-0820">tRNA-binding</keyword>
<keyword id="KW-0832">Ubl conjugation</keyword>
<keyword id="KW-0862">Zinc</keyword>
<keyword id="KW-0863">Zinc-finger</keyword>